<organism>
    <name type="scientific">Heterololigo bleekeri</name>
    <name type="common">Spear squid</name>
    <name type="synonym">Loligo bleekeri</name>
    <dbReference type="NCBI Taxonomy" id="1423826"/>
    <lineage>
        <taxon>Eukaryota</taxon>
        <taxon>Metazoa</taxon>
        <taxon>Spiralia</taxon>
        <taxon>Lophotrochozoa</taxon>
        <taxon>Mollusca</taxon>
        <taxon>Cephalopoda</taxon>
        <taxon>Coleoidea</taxon>
        <taxon>Decapodiformes</taxon>
        <taxon>Myopsida</taxon>
        <taxon>Loliginidae</taxon>
        <taxon>Heterololigo</taxon>
    </lineage>
</organism>
<proteinExistence type="inferred from homology"/>
<gene>
    <name type="primary">ND1</name>
</gene>
<evidence type="ECO:0000250" key="1"/>
<evidence type="ECO:0000255" key="2"/>
<evidence type="ECO:0000305" key="3"/>
<sequence length="313" mass="34914">MMLVELLSGVISCVCALLAVAFFTLLERKGLGYFQLRKGPNKVGLMGLPQPLADAVKLFTEELVKPTLVNVFPFLVCPAMSLFLALVLWILYNNYFVCSMGGLSMLLFLCVSSLGVYSVMGAGWFSNSKYALLGSVRAVAQSISYEVSMSLILMSCLLLVGSMSLSMIMKYQFFVWVAFVNFFMMLMWFVSCVAETHRAPFDFAEGESELVSGFNTEYGGVGFALLFMAEYGNILFMSVLVISLFFGGVVFVGVFGMGLCVMVSFVGWLFIWVRASYPRYRYDLLMYLIWKSYLPSVLSILMFLVVSVYILNG</sequence>
<accession>O47479</accession>
<dbReference type="EC" id="7.1.1.2"/>
<dbReference type="EMBL" id="AB009838">
    <property type="protein sequence ID" value="BAA24062.1"/>
    <property type="molecule type" value="Genomic_DNA"/>
</dbReference>
<dbReference type="EMBL" id="AB029616">
    <property type="protein sequence ID" value="BAB03649.1"/>
    <property type="molecule type" value="Genomic_DNA"/>
</dbReference>
<dbReference type="RefSeq" id="NP_062837.1">
    <property type="nucleotide sequence ID" value="NC_002507.1"/>
</dbReference>
<dbReference type="SMR" id="O47479"/>
<dbReference type="GeneID" id="809445"/>
<dbReference type="CTD" id="4535"/>
<dbReference type="GO" id="GO:0005743">
    <property type="term" value="C:mitochondrial inner membrane"/>
    <property type="evidence" value="ECO:0007669"/>
    <property type="project" value="UniProtKB-SubCell"/>
</dbReference>
<dbReference type="GO" id="GO:0008137">
    <property type="term" value="F:NADH dehydrogenase (ubiquinone) activity"/>
    <property type="evidence" value="ECO:0007669"/>
    <property type="project" value="UniProtKB-EC"/>
</dbReference>
<dbReference type="GO" id="GO:0009060">
    <property type="term" value="P:aerobic respiration"/>
    <property type="evidence" value="ECO:0007669"/>
    <property type="project" value="TreeGrafter"/>
</dbReference>
<dbReference type="HAMAP" id="MF_01350">
    <property type="entry name" value="NDH1_NuoH"/>
    <property type="match status" value="1"/>
</dbReference>
<dbReference type="InterPro" id="IPR001694">
    <property type="entry name" value="NADH_UbQ_OxRdtase_su1/FPO"/>
</dbReference>
<dbReference type="InterPro" id="IPR018086">
    <property type="entry name" value="NADH_UbQ_OxRdtase_su1_CS"/>
</dbReference>
<dbReference type="PANTHER" id="PTHR11432">
    <property type="entry name" value="NADH DEHYDROGENASE SUBUNIT 1"/>
    <property type="match status" value="1"/>
</dbReference>
<dbReference type="PANTHER" id="PTHR11432:SF3">
    <property type="entry name" value="NADH-UBIQUINONE OXIDOREDUCTASE CHAIN 1"/>
    <property type="match status" value="1"/>
</dbReference>
<dbReference type="Pfam" id="PF00146">
    <property type="entry name" value="NADHdh"/>
    <property type="match status" value="1"/>
</dbReference>
<dbReference type="PROSITE" id="PS00667">
    <property type="entry name" value="COMPLEX1_ND1_1"/>
    <property type="match status" value="1"/>
</dbReference>
<dbReference type="PROSITE" id="PS00668">
    <property type="entry name" value="COMPLEX1_ND1_2"/>
    <property type="match status" value="1"/>
</dbReference>
<reference key="1">
    <citation type="submission" date="1997-12" db="EMBL/GenBank/DDBJ databases">
        <title>Completing of squid (Loligo breekeri) mitochondrial genome sequencing.</title>
        <authorList>
            <person name="Tomita K."/>
            <person name="Ueda T."/>
            <person name="Watanabe K."/>
        </authorList>
    </citation>
    <scope>NUCLEOTIDE SEQUENCE [GENOMIC DNA]</scope>
</reference>
<geneLocation type="mitochondrion"/>
<keyword id="KW-0249">Electron transport</keyword>
<keyword id="KW-0472">Membrane</keyword>
<keyword id="KW-0496">Mitochondrion</keyword>
<keyword id="KW-0999">Mitochondrion inner membrane</keyword>
<keyword id="KW-0520">NAD</keyword>
<keyword id="KW-0679">Respiratory chain</keyword>
<keyword id="KW-1278">Translocase</keyword>
<keyword id="KW-0812">Transmembrane</keyword>
<keyword id="KW-1133">Transmembrane helix</keyword>
<keyword id="KW-0813">Transport</keyword>
<keyword id="KW-0830">Ubiquinone</keyword>
<comment type="function">
    <text evidence="1">Core subunit of the mitochondrial membrane respiratory chain NADH dehydrogenase (Complex I) that is believed to belong to the minimal assembly required for catalysis. Complex I functions in the transfer of electrons from NADH to the respiratory chain. The immediate electron acceptor for the enzyme is believed to be ubiquinone (By similarity).</text>
</comment>
<comment type="catalytic activity">
    <reaction>
        <text>a ubiquinone + NADH + 5 H(+)(in) = a ubiquinol + NAD(+) + 4 H(+)(out)</text>
        <dbReference type="Rhea" id="RHEA:29091"/>
        <dbReference type="Rhea" id="RHEA-COMP:9565"/>
        <dbReference type="Rhea" id="RHEA-COMP:9566"/>
        <dbReference type="ChEBI" id="CHEBI:15378"/>
        <dbReference type="ChEBI" id="CHEBI:16389"/>
        <dbReference type="ChEBI" id="CHEBI:17976"/>
        <dbReference type="ChEBI" id="CHEBI:57540"/>
        <dbReference type="ChEBI" id="CHEBI:57945"/>
        <dbReference type="EC" id="7.1.1.2"/>
    </reaction>
</comment>
<comment type="subcellular location">
    <subcellularLocation>
        <location evidence="1">Mitochondrion inner membrane</location>
        <topology evidence="1">Multi-pass membrane protein</topology>
    </subcellularLocation>
</comment>
<comment type="similarity">
    <text evidence="3">Belongs to the complex I subunit 1 family.</text>
</comment>
<name>NU1M_HETBL</name>
<feature type="chain" id="PRO_0000117421" description="NADH-ubiquinone oxidoreductase chain 1">
    <location>
        <begin position="1"/>
        <end position="313"/>
    </location>
</feature>
<feature type="transmembrane region" description="Helical" evidence="2">
    <location>
        <begin position="6"/>
        <end position="26"/>
    </location>
</feature>
<feature type="transmembrane region" description="Helical" evidence="2">
    <location>
        <begin position="71"/>
        <end position="91"/>
    </location>
</feature>
<feature type="transmembrane region" description="Helical" evidence="2">
    <location>
        <begin position="105"/>
        <end position="125"/>
    </location>
</feature>
<feature type="transmembrane region" description="Helical" evidence="2">
    <location>
        <begin position="149"/>
        <end position="169"/>
    </location>
</feature>
<feature type="transmembrane region" description="Helical" evidence="2">
    <location>
        <begin position="173"/>
        <end position="193"/>
    </location>
</feature>
<feature type="transmembrane region" description="Helical" evidence="2">
    <location>
        <begin position="220"/>
        <end position="242"/>
    </location>
</feature>
<feature type="transmembrane region" description="Helical" evidence="2">
    <location>
        <begin position="255"/>
        <end position="275"/>
    </location>
</feature>
<feature type="transmembrane region" description="Helical" evidence="2">
    <location>
        <begin position="293"/>
        <end position="313"/>
    </location>
</feature>
<protein>
    <recommendedName>
        <fullName>NADH-ubiquinone oxidoreductase chain 1</fullName>
        <ecNumber>7.1.1.2</ecNumber>
    </recommendedName>
    <alternativeName>
        <fullName>NADH dehydrogenase subunit 1</fullName>
    </alternativeName>
</protein>